<keyword id="KW-1185">Reference proteome</keyword>
<evidence type="ECO:0000305" key="1"/>
<organism>
    <name type="scientific">Mycobacterium tuberculosis (strain ATCC 25618 / H37Rv)</name>
    <dbReference type="NCBI Taxonomy" id="83332"/>
    <lineage>
        <taxon>Bacteria</taxon>
        <taxon>Bacillati</taxon>
        <taxon>Actinomycetota</taxon>
        <taxon>Actinomycetes</taxon>
        <taxon>Mycobacteriales</taxon>
        <taxon>Mycobacteriaceae</taxon>
        <taxon>Mycobacterium</taxon>
        <taxon>Mycobacterium tuberculosis complex</taxon>
    </lineage>
</organism>
<gene>
    <name type="primary">PPE40</name>
    <name type="ordered locus">Rv2356c</name>
</gene>
<name>PPE40_MYCTU</name>
<feature type="chain" id="PRO_0000379115" description="Uncharacterized PPE family protein PPE40">
    <location>
        <begin position="1"/>
        <end position="615"/>
    </location>
</feature>
<comment type="similarity">
    <text evidence="1">Belongs to the mycobacterial PPE family.</text>
</comment>
<protein>
    <recommendedName>
        <fullName>Uncharacterized PPE family protein PPE40</fullName>
    </recommendedName>
</protein>
<dbReference type="EMBL" id="AL123456">
    <property type="protein sequence ID" value="CCP45144.1"/>
    <property type="molecule type" value="Genomic_DNA"/>
</dbReference>
<dbReference type="PIR" id="E70663">
    <property type="entry name" value="E70663"/>
</dbReference>
<dbReference type="RefSeq" id="WP_003904827.1">
    <property type="nucleotide sequence ID" value="NZ_KK339370.1"/>
</dbReference>
<dbReference type="SMR" id="P9WHZ7"/>
<dbReference type="STRING" id="83332.Rv2356c"/>
<dbReference type="PaxDb" id="83332-Rv2356c"/>
<dbReference type="KEGG" id="mtv:RVBD_2356c"/>
<dbReference type="PATRIC" id="fig|83332.111.peg.2628"/>
<dbReference type="TubercuList" id="Rv2356c"/>
<dbReference type="eggNOG" id="COG5651">
    <property type="taxonomic scope" value="Bacteria"/>
</dbReference>
<dbReference type="InParanoid" id="P9WHZ7"/>
<dbReference type="PhylomeDB" id="P9WHZ7"/>
<dbReference type="Proteomes" id="UP000001584">
    <property type="component" value="Chromosome"/>
</dbReference>
<dbReference type="GO" id="GO:0052572">
    <property type="term" value="P:response to host immune response"/>
    <property type="evidence" value="ECO:0000318"/>
    <property type="project" value="GO_Central"/>
</dbReference>
<dbReference type="FunFam" id="1.20.1260.20:FF:000001">
    <property type="entry name" value="PPE family protein PPE41"/>
    <property type="match status" value="1"/>
</dbReference>
<dbReference type="Gene3D" id="1.20.1260.20">
    <property type="entry name" value="PPE superfamily"/>
    <property type="match status" value="1"/>
</dbReference>
<dbReference type="InterPro" id="IPR002989">
    <property type="entry name" value="Mycobac_pentapep"/>
</dbReference>
<dbReference type="InterPro" id="IPR000030">
    <property type="entry name" value="PPE_dom"/>
</dbReference>
<dbReference type="InterPro" id="IPR038332">
    <property type="entry name" value="PPE_sf"/>
</dbReference>
<dbReference type="PANTHER" id="PTHR46766">
    <property type="entry name" value="GLUTAMINE-RICH PROTEIN 2"/>
    <property type="match status" value="1"/>
</dbReference>
<dbReference type="PANTHER" id="PTHR46766:SF1">
    <property type="entry name" value="GLUTAMINE-RICH PROTEIN 2"/>
    <property type="match status" value="1"/>
</dbReference>
<dbReference type="Pfam" id="PF01469">
    <property type="entry name" value="Pentapeptide_2"/>
    <property type="match status" value="6"/>
</dbReference>
<dbReference type="Pfam" id="PF00823">
    <property type="entry name" value="PPE"/>
    <property type="match status" value="1"/>
</dbReference>
<dbReference type="SUPFAM" id="SSF140459">
    <property type="entry name" value="PE/PPE dimer-like"/>
    <property type="match status" value="1"/>
</dbReference>
<sequence>MVNFSVLPPEINSGRMFFGAGSGPMLAAAAAWDGLAAELGLAAESFGLVTSGLAGGSGQAWQGAAAAAMVVAAAPYAGWLAAAAARAGGAAVQAKAVAGAFEAARAAMVDPVVVAANRSAFVQLVLSNVFGQNAPAIAAAEATYEQMWAADVAAMVGYHGGASAAAAALAPWQQAVPGLSGLLGGAANAPAAAAQGAAQGLAELTLNLGVGNIGSLNLGSGNIGGTNVGSGNVGGTNLGSGNYGSLNWGSGNTGTGNAGSGNTGDYNPGSGNFGSGNFGSGNIGSLNVGSGNFGTLNLANGNNGDVNFGGGNTGDFNFGGGNNGTLNFGFGNTGSGNFGFGNTGNNNIGIGLTGDGQIGIGGLNSGTGNIGFGNSGNNNIGFFNSGDGNIGFFNSGDGNTGFGNAGNINTGFWNAGNLNTGFGSAGNGNVGIFDGGNSNSGSFNVGFQNTGFGNSGAGNTGFFNAGDSNTGFANAGNVNTGFFNGGDINTGGFNGGNVNTGFGSALTQAGANSGFGNLGTGNSGWGNSDPSGTGNSGFFNTGNGNSGFSNAGPAMLPGFNSGFANIGSFNAGIANSGNNLAGISNSGDDSSGAVNSGSQNSGAFNAGVGLSGFFR</sequence>
<proteinExistence type="evidence at protein level"/>
<reference key="1">
    <citation type="journal article" date="1998" name="Nature">
        <title>Deciphering the biology of Mycobacterium tuberculosis from the complete genome sequence.</title>
        <authorList>
            <person name="Cole S.T."/>
            <person name="Brosch R."/>
            <person name="Parkhill J."/>
            <person name="Garnier T."/>
            <person name="Churcher C.M."/>
            <person name="Harris D.E."/>
            <person name="Gordon S.V."/>
            <person name="Eiglmeier K."/>
            <person name="Gas S."/>
            <person name="Barry C.E. III"/>
            <person name="Tekaia F."/>
            <person name="Badcock K."/>
            <person name="Basham D."/>
            <person name="Brown D."/>
            <person name="Chillingworth T."/>
            <person name="Connor R."/>
            <person name="Davies R.M."/>
            <person name="Devlin K."/>
            <person name="Feltwell T."/>
            <person name="Gentles S."/>
            <person name="Hamlin N."/>
            <person name="Holroyd S."/>
            <person name="Hornsby T."/>
            <person name="Jagels K."/>
            <person name="Krogh A."/>
            <person name="McLean J."/>
            <person name="Moule S."/>
            <person name="Murphy L.D."/>
            <person name="Oliver S."/>
            <person name="Osborne J."/>
            <person name="Quail M.A."/>
            <person name="Rajandream M.A."/>
            <person name="Rogers J."/>
            <person name="Rutter S."/>
            <person name="Seeger K."/>
            <person name="Skelton S."/>
            <person name="Squares S."/>
            <person name="Squares R."/>
            <person name="Sulston J.E."/>
            <person name="Taylor K."/>
            <person name="Whitehead S."/>
            <person name="Barrell B.G."/>
        </authorList>
    </citation>
    <scope>NUCLEOTIDE SEQUENCE [LARGE SCALE GENOMIC DNA]</scope>
    <source>
        <strain>ATCC 25618 / H37Rv</strain>
    </source>
</reference>
<reference key="2">
    <citation type="journal article" date="2011" name="Mol. Cell. Proteomics">
        <title>Proteogenomic analysis of Mycobacterium tuberculosis by high resolution mass spectrometry.</title>
        <authorList>
            <person name="Kelkar D.S."/>
            <person name="Kumar D."/>
            <person name="Kumar P."/>
            <person name="Balakrishnan L."/>
            <person name="Muthusamy B."/>
            <person name="Yadav A.K."/>
            <person name="Shrivastava P."/>
            <person name="Marimuthu A."/>
            <person name="Anand S."/>
            <person name="Sundaram H."/>
            <person name="Kingsbury R."/>
            <person name="Harsha H.C."/>
            <person name="Nair B."/>
            <person name="Prasad T.S."/>
            <person name="Chauhan D.S."/>
            <person name="Katoch K."/>
            <person name="Katoch V.M."/>
            <person name="Kumar P."/>
            <person name="Chaerkady R."/>
            <person name="Ramachandran S."/>
            <person name="Dash D."/>
            <person name="Pandey A."/>
        </authorList>
    </citation>
    <scope>IDENTIFICATION BY MASS SPECTROMETRY [LARGE SCALE ANALYSIS]</scope>
    <source>
        <strain>ATCC 25618 / H37Rv</strain>
    </source>
</reference>
<accession>P9WHZ7</accession>
<accession>L0T9D9</accession>
<accession>Q79FF2</accession>
<accession>Q7D7A1</accession>